<reference key="1">
    <citation type="journal article" date="1998" name="Science">
        <title>Genome sequence of the nematode C. elegans: a platform for investigating biology.</title>
        <authorList>
            <consortium name="The C. elegans sequencing consortium"/>
        </authorList>
    </citation>
    <scope>NUCLEOTIDE SEQUENCE [LARGE SCALE GENOMIC DNA]</scope>
    <source>
        <strain>Bristol N2</strain>
    </source>
</reference>
<gene>
    <name type="primary">msp-32</name>
    <name type="ORF">R05F9.3</name>
</gene>
<dbReference type="EMBL" id="FO081120">
    <property type="protein sequence ID" value="CCD69272.1"/>
    <property type="molecule type" value="Genomic_DNA"/>
</dbReference>
<dbReference type="PIR" id="T16687">
    <property type="entry name" value="T16687"/>
</dbReference>
<dbReference type="RefSeq" id="NP_494891.1">
    <property type="nucleotide sequence ID" value="NM_062490.1"/>
</dbReference>
<dbReference type="SMR" id="P53018"/>
<dbReference type="FunCoup" id="P53018">
    <property type="interactions" value="10"/>
</dbReference>
<dbReference type="STRING" id="6239.R05F9.3.1"/>
<dbReference type="PaxDb" id="6239-R05F9.3"/>
<dbReference type="PeptideAtlas" id="P53018"/>
<dbReference type="EnsemblMetazoa" id="R05F9.3.1">
    <property type="protein sequence ID" value="R05F9.3.1"/>
    <property type="gene ID" value="WBGene00003430"/>
</dbReference>
<dbReference type="UCSC" id="R05F9.3">
    <property type="organism name" value="c. elegans"/>
</dbReference>
<dbReference type="AGR" id="WB:WBGene00003430"/>
<dbReference type="WormBase" id="R05F9.3">
    <property type="protein sequence ID" value="CE52855"/>
    <property type="gene ID" value="WBGene00003430"/>
    <property type="gene designation" value="msp-32"/>
</dbReference>
<dbReference type="eggNOG" id="ENOG502RXF6">
    <property type="taxonomic scope" value="Eukaryota"/>
</dbReference>
<dbReference type="GeneTree" id="ENSGT00970000195833"/>
<dbReference type="HOGENOM" id="CLU_120664_0_0_1"/>
<dbReference type="InParanoid" id="P53018"/>
<dbReference type="OMA" id="EMPISKF"/>
<dbReference type="PhylomeDB" id="P53018"/>
<dbReference type="PRO" id="PR:P53018"/>
<dbReference type="Proteomes" id="UP000001940">
    <property type="component" value="Chromosome II"/>
</dbReference>
<dbReference type="Bgee" id="WBGene00003430">
    <property type="expression patterns" value="Expressed in material anatomical entity and 2 other cell types or tissues"/>
</dbReference>
<dbReference type="GO" id="GO:0005737">
    <property type="term" value="C:cytoplasm"/>
    <property type="evidence" value="ECO:0007669"/>
    <property type="project" value="UniProtKB-KW"/>
</dbReference>
<dbReference type="GO" id="GO:0005856">
    <property type="term" value="C:cytoskeleton"/>
    <property type="evidence" value="ECO:0007669"/>
    <property type="project" value="UniProtKB-SubCell"/>
</dbReference>
<dbReference type="GO" id="GO:0031143">
    <property type="term" value="C:pseudopodium"/>
    <property type="evidence" value="ECO:0007669"/>
    <property type="project" value="UniProtKB-SubCell"/>
</dbReference>
<dbReference type="FunFam" id="2.60.40.10:FF:001120">
    <property type="entry name" value="Major sperm protein 19/31/40/45/50/51/53/59/61/65/81/113/142"/>
    <property type="match status" value="1"/>
</dbReference>
<dbReference type="Gene3D" id="2.60.40.10">
    <property type="entry name" value="Immunoglobulins"/>
    <property type="match status" value="1"/>
</dbReference>
<dbReference type="InterPro" id="IPR013783">
    <property type="entry name" value="Ig-like_fold"/>
</dbReference>
<dbReference type="InterPro" id="IPR000535">
    <property type="entry name" value="MSP_dom"/>
</dbReference>
<dbReference type="InterPro" id="IPR051155">
    <property type="entry name" value="Nematode_MSP"/>
</dbReference>
<dbReference type="InterPro" id="IPR008962">
    <property type="entry name" value="PapD-like_sf"/>
</dbReference>
<dbReference type="PANTHER" id="PTHR22920">
    <property type="entry name" value="MAJOR SPERM PROTEIN"/>
    <property type="match status" value="1"/>
</dbReference>
<dbReference type="PANTHER" id="PTHR22920:SF7">
    <property type="entry name" value="MSP DOMAIN-CONTAINING PROTEIN-RELATED"/>
    <property type="match status" value="1"/>
</dbReference>
<dbReference type="Pfam" id="PF00635">
    <property type="entry name" value="Motile_Sperm"/>
    <property type="match status" value="1"/>
</dbReference>
<dbReference type="SUPFAM" id="SSF49354">
    <property type="entry name" value="PapD-like"/>
    <property type="match status" value="1"/>
</dbReference>
<dbReference type="PROSITE" id="PS50202">
    <property type="entry name" value="MSP"/>
    <property type="match status" value="1"/>
</dbReference>
<name>MSP32_CAEEL</name>
<sequence>MPNAECRHNAGFWSAAYAEMPISKFTAYAENAVLPKRKMDGISAYADMPKKIFGGICRYAVMPKNSECRTGMIQTQPGTKIVFNAPYDDKHTYHIKVINSSARRIGYGIKTTNMKRLGVDPPCGVLDPKEAVLLAVSCDAFAFGQEDTNNDRITVEWTNTPDGAAKQFRREWFQGDGMVRRKNLPIEYNP</sequence>
<accession>P53018</accession>
<proteinExistence type="evidence at transcript level"/>
<keyword id="KW-0966">Cell projection</keyword>
<keyword id="KW-0963">Cytoplasm</keyword>
<keyword id="KW-0206">Cytoskeleton</keyword>
<keyword id="KW-1185">Reference proteome</keyword>
<protein>
    <recommendedName>
        <fullName>Major sperm protein 32</fullName>
        <shortName>MSP</shortName>
    </recommendedName>
</protein>
<comment type="function">
    <text>Central component in molecular interactions underlying sperm crawling. Forms an extensive filament system that extends from sperm villipoda, along the leading edge of the pseudopod.</text>
</comment>
<comment type="subcellular location">
    <subcellularLocation>
        <location>Cell projection</location>
        <location>Pseudopodium</location>
    </subcellularLocation>
    <subcellularLocation>
        <location>Cytoplasm</location>
        <location>Cytoskeleton</location>
    </subcellularLocation>
</comment>
<comment type="tissue specificity">
    <text>Sperm.</text>
</comment>
<comment type="miscellaneous">
    <text>Around 30 MSP isoforms may exist in C.elegans.</text>
</comment>
<organism>
    <name type="scientific">Caenorhabditis elegans</name>
    <dbReference type="NCBI Taxonomy" id="6239"/>
    <lineage>
        <taxon>Eukaryota</taxon>
        <taxon>Metazoa</taxon>
        <taxon>Ecdysozoa</taxon>
        <taxon>Nematoda</taxon>
        <taxon>Chromadorea</taxon>
        <taxon>Rhabditida</taxon>
        <taxon>Rhabditina</taxon>
        <taxon>Rhabditomorpha</taxon>
        <taxon>Rhabditoidea</taxon>
        <taxon>Rhabditidae</taxon>
        <taxon>Peloderinae</taxon>
        <taxon>Caenorhabditis</taxon>
    </lineage>
</organism>
<feature type="chain" id="PRO_0000213438" description="Major sperm protein 32">
    <location>
        <begin position="1"/>
        <end position="190"/>
    </location>
</feature>
<feature type="domain" description="MSP" evidence="1">
    <location>
        <begin position="72"/>
        <end position="189"/>
    </location>
</feature>
<evidence type="ECO:0000255" key="1">
    <source>
        <dbReference type="PROSITE-ProRule" id="PRU00132"/>
    </source>
</evidence>